<name>PDXH_RHIJ3</name>
<feature type="chain" id="PRO_0000255880" description="Pyridoxine/pyridoxamine 5'-phosphate oxidase">
    <location>
        <begin position="1"/>
        <end position="206"/>
    </location>
</feature>
<feature type="binding site" evidence="1">
    <location>
        <begin position="53"/>
        <end position="58"/>
    </location>
    <ligand>
        <name>FMN</name>
        <dbReference type="ChEBI" id="CHEBI:58210"/>
    </ligand>
</feature>
<feature type="binding site" evidence="1">
    <location>
        <position position="58"/>
    </location>
    <ligand>
        <name>substrate</name>
    </ligand>
</feature>
<feature type="binding site" evidence="1">
    <location>
        <begin position="68"/>
        <end position="69"/>
    </location>
    <ligand>
        <name>FMN</name>
        <dbReference type="ChEBI" id="CHEBI:58210"/>
    </ligand>
</feature>
<feature type="binding site" evidence="1">
    <location>
        <position position="75"/>
    </location>
    <ligand>
        <name>FMN</name>
        <dbReference type="ChEBI" id="CHEBI:58210"/>
    </ligand>
</feature>
<feature type="binding site" evidence="1">
    <location>
        <position position="97"/>
    </location>
    <ligand>
        <name>FMN</name>
        <dbReference type="ChEBI" id="CHEBI:58210"/>
    </ligand>
</feature>
<feature type="binding site" evidence="1">
    <location>
        <position position="115"/>
    </location>
    <ligand>
        <name>substrate</name>
    </ligand>
</feature>
<feature type="binding site" evidence="1">
    <location>
        <position position="119"/>
    </location>
    <ligand>
        <name>substrate</name>
    </ligand>
</feature>
<feature type="binding site" evidence="1">
    <location>
        <position position="123"/>
    </location>
    <ligand>
        <name>substrate</name>
    </ligand>
</feature>
<feature type="binding site" evidence="1">
    <location>
        <begin position="132"/>
        <end position="133"/>
    </location>
    <ligand>
        <name>FMN</name>
        <dbReference type="ChEBI" id="CHEBI:58210"/>
    </ligand>
</feature>
<feature type="binding site" evidence="1">
    <location>
        <position position="177"/>
    </location>
    <ligand>
        <name>FMN</name>
        <dbReference type="ChEBI" id="CHEBI:58210"/>
    </ligand>
</feature>
<feature type="binding site" evidence="1">
    <location>
        <begin position="183"/>
        <end position="185"/>
    </location>
    <ligand>
        <name>substrate</name>
    </ligand>
</feature>
<feature type="binding site" evidence="1">
    <location>
        <position position="187"/>
    </location>
    <ligand>
        <name>FMN</name>
        <dbReference type="ChEBI" id="CHEBI:58210"/>
    </ligand>
</feature>
<proteinExistence type="inferred from homology"/>
<evidence type="ECO:0000255" key="1">
    <source>
        <dbReference type="HAMAP-Rule" id="MF_01629"/>
    </source>
</evidence>
<gene>
    <name evidence="1" type="primary">pdxH</name>
    <name type="ordered locus">RL1014</name>
</gene>
<sequence>MSANELTSGDFTESGEPFKLFAEWLKEAEVSEPNDPNAVALATVDEDGLPNVRMVLLKGFDDDGFVFYTNFESQKGREILGQKKAAMCFHWKSLRRQVRLRGPVEIVTDAEADAYFKTRARGSRIGAWASRQSRPLESRFALEKAVAEYTARYAIGEIPRPAHWSGFRIRPTSIEFWKDQKFRLHDRVEFRRPSPEGEWDKVRMYP</sequence>
<dbReference type="EC" id="1.4.3.5" evidence="1"/>
<dbReference type="EMBL" id="AM236080">
    <property type="protein sequence ID" value="CAK06511.1"/>
    <property type="molecule type" value="Genomic_DNA"/>
</dbReference>
<dbReference type="RefSeq" id="WP_011650750.1">
    <property type="nucleotide sequence ID" value="NC_008380.1"/>
</dbReference>
<dbReference type="SMR" id="Q1MKJ4"/>
<dbReference type="EnsemblBacteria" id="CAK06511">
    <property type="protein sequence ID" value="CAK06511"/>
    <property type="gene ID" value="RL1014"/>
</dbReference>
<dbReference type="KEGG" id="rle:RL1014"/>
<dbReference type="eggNOG" id="COG0259">
    <property type="taxonomic scope" value="Bacteria"/>
</dbReference>
<dbReference type="HOGENOM" id="CLU_032263_2_3_5"/>
<dbReference type="UniPathway" id="UPA01068">
    <property type="reaction ID" value="UER00304"/>
</dbReference>
<dbReference type="UniPathway" id="UPA01068">
    <property type="reaction ID" value="UER00305"/>
</dbReference>
<dbReference type="Proteomes" id="UP000006575">
    <property type="component" value="Chromosome"/>
</dbReference>
<dbReference type="GO" id="GO:0010181">
    <property type="term" value="F:FMN binding"/>
    <property type="evidence" value="ECO:0007669"/>
    <property type="project" value="UniProtKB-UniRule"/>
</dbReference>
<dbReference type="GO" id="GO:0004733">
    <property type="term" value="F:pyridoxamine phosphate oxidase activity"/>
    <property type="evidence" value="ECO:0007669"/>
    <property type="project" value="UniProtKB-UniRule"/>
</dbReference>
<dbReference type="GO" id="GO:0008615">
    <property type="term" value="P:pyridoxine biosynthetic process"/>
    <property type="evidence" value="ECO:0007669"/>
    <property type="project" value="UniProtKB-KW"/>
</dbReference>
<dbReference type="Gene3D" id="2.30.110.10">
    <property type="entry name" value="Electron Transport, Fmn-binding Protein, Chain A"/>
    <property type="match status" value="1"/>
</dbReference>
<dbReference type="HAMAP" id="MF_01629">
    <property type="entry name" value="PdxH"/>
    <property type="match status" value="1"/>
</dbReference>
<dbReference type="InterPro" id="IPR000659">
    <property type="entry name" value="Pyridox_Oxase"/>
</dbReference>
<dbReference type="InterPro" id="IPR011576">
    <property type="entry name" value="Pyridox_Oxase_N"/>
</dbReference>
<dbReference type="InterPro" id="IPR019576">
    <property type="entry name" value="Pyridoxamine_oxidase_dimer_C"/>
</dbReference>
<dbReference type="InterPro" id="IPR012349">
    <property type="entry name" value="Split_barrel_FMN-bd"/>
</dbReference>
<dbReference type="NCBIfam" id="TIGR00558">
    <property type="entry name" value="pdxH"/>
    <property type="match status" value="1"/>
</dbReference>
<dbReference type="NCBIfam" id="NF004231">
    <property type="entry name" value="PRK05679.1"/>
    <property type="match status" value="1"/>
</dbReference>
<dbReference type="PANTHER" id="PTHR10851:SF0">
    <property type="entry name" value="PYRIDOXINE-5'-PHOSPHATE OXIDASE"/>
    <property type="match status" value="1"/>
</dbReference>
<dbReference type="PANTHER" id="PTHR10851">
    <property type="entry name" value="PYRIDOXINE-5-PHOSPHATE OXIDASE"/>
    <property type="match status" value="1"/>
</dbReference>
<dbReference type="Pfam" id="PF10590">
    <property type="entry name" value="PNP_phzG_C"/>
    <property type="match status" value="1"/>
</dbReference>
<dbReference type="Pfam" id="PF01243">
    <property type="entry name" value="PNPOx_N"/>
    <property type="match status" value="1"/>
</dbReference>
<dbReference type="PIRSF" id="PIRSF000190">
    <property type="entry name" value="Pyd_amn-ph_oxd"/>
    <property type="match status" value="1"/>
</dbReference>
<dbReference type="SUPFAM" id="SSF50475">
    <property type="entry name" value="FMN-binding split barrel"/>
    <property type="match status" value="1"/>
</dbReference>
<comment type="function">
    <text evidence="1">Catalyzes the oxidation of either pyridoxine 5'-phosphate (PNP) or pyridoxamine 5'-phosphate (PMP) into pyridoxal 5'-phosphate (PLP).</text>
</comment>
<comment type="catalytic activity">
    <reaction evidence="1">
        <text>pyridoxamine 5'-phosphate + O2 + H2O = pyridoxal 5'-phosphate + H2O2 + NH4(+)</text>
        <dbReference type="Rhea" id="RHEA:15817"/>
        <dbReference type="ChEBI" id="CHEBI:15377"/>
        <dbReference type="ChEBI" id="CHEBI:15379"/>
        <dbReference type="ChEBI" id="CHEBI:16240"/>
        <dbReference type="ChEBI" id="CHEBI:28938"/>
        <dbReference type="ChEBI" id="CHEBI:58451"/>
        <dbReference type="ChEBI" id="CHEBI:597326"/>
        <dbReference type="EC" id="1.4.3.5"/>
    </reaction>
</comment>
<comment type="catalytic activity">
    <reaction evidence="1">
        <text>pyridoxine 5'-phosphate + O2 = pyridoxal 5'-phosphate + H2O2</text>
        <dbReference type="Rhea" id="RHEA:15149"/>
        <dbReference type="ChEBI" id="CHEBI:15379"/>
        <dbReference type="ChEBI" id="CHEBI:16240"/>
        <dbReference type="ChEBI" id="CHEBI:58589"/>
        <dbReference type="ChEBI" id="CHEBI:597326"/>
        <dbReference type="EC" id="1.4.3.5"/>
    </reaction>
</comment>
<comment type="cofactor">
    <cofactor evidence="1">
        <name>FMN</name>
        <dbReference type="ChEBI" id="CHEBI:58210"/>
    </cofactor>
    <text evidence="1">Binds 1 FMN per subunit.</text>
</comment>
<comment type="pathway">
    <text evidence="1">Cofactor metabolism; pyridoxal 5'-phosphate salvage; pyridoxal 5'-phosphate from pyridoxamine 5'-phosphate: step 1/1.</text>
</comment>
<comment type="pathway">
    <text evidence="1">Cofactor metabolism; pyridoxal 5'-phosphate salvage; pyridoxal 5'-phosphate from pyridoxine 5'-phosphate: step 1/1.</text>
</comment>
<comment type="subunit">
    <text evidence="1">Homodimer.</text>
</comment>
<comment type="similarity">
    <text evidence="1">Belongs to the pyridoxamine 5'-phosphate oxidase family.</text>
</comment>
<organism>
    <name type="scientific">Rhizobium johnstonii (strain DSM 114642 / LMG 32736 / 3841)</name>
    <name type="common">Rhizobium leguminosarum bv. viciae</name>
    <dbReference type="NCBI Taxonomy" id="216596"/>
    <lineage>
        <taxon>Bacteria</taxon>
        <taxon>Pseudomonadati</taxon>
        <taxon>Pseudomonadota</taxon>
        <taxon>Alphaproteobacteria</taxon>
        <taxon>Hyphomicrobiales</taxon>
        <taxon>Rhizobiaceae</taxon>
        <taxon>Rhizobium/Agrobacterium group</taxon>
        <taxon>Rhizobium</taxon>
        <taxon>Rhizobium johnstonii</taxon>
    </lineage>
</organism>
<keyword id="KW-0285">Flavoprotein</keyword>
<keyword id="KW-0288">FMN</keyword>
<keyword id="KW-0560">Oxidoreductase</keyword>
<keyword id="KW-0664">Pyridoxine biosynthesis</keyword>
<reference key="1">
    <citation type="journal article" date="2006" name="Genome Biol.">
        <title>The genome of Rhizobium leguminosarum has recognizable core and accessory components.</title>
        <authorList>
            <person name="Young J.P.W."/>
            <person name="Crossman L.C."/>
            <person name="Johnston A.W.B."/>
            <person name="Thomson N.R."/>
            <person name="Ghazoui Z.F."/>
            <person name="Hull K.H."/>
            <person name="Wexler M."/>
            <person name="Curson A.R.J."/>
            <person name="Todd J.D."/>
            <person name="Poole P.S."/>
            <person name="Mauchline T.H."/>
            <person name="East A.K."/>
            <person name="Quail M.A."/>
            <person name="Churcher C."/>
            <person name="Arrowsmith C."/>
            <person name="Cherevach I."/>
            <person name="Chillingworth T."/>
            <person name="Clarke K."/>
            <person name="Cronin A."/>
            <person name="Davis P."/>
            <person name="Fraser A."/>
            <person name="Hance Z."/>
            <person name="Hauser H."/>
            <person name="Jagels K."/>
            <person name="Moule S."/>
            <person name="Mungall K."/>
            <person name="Norbertczak H."/>
            <person name="Rabbinowitsch E."/>
            <person name="Sanders M."/>
            <person name="Simmonds M."/>
            <person name="Whitehead S."/>
            <person name="Parkhill J."/>
        </authorList>
    </citation>
    <scope>NUCLEOTIDE SEQUENCE [LARGE SCALE GENOMIC DNA]</scope>
    <source>
        <strain>DSM 114642 / LMG 32736 / 3841</strain>
    </source>
</reference>
<accession>Q1MKJ4</accession>
<protein>
    <recommendedName>
        <fullName evidence="1">Pyridoxine/pyridoxamine 5'-phosphate oxidase</fullName>
        <ecNumber evidence="1">1.4.3.5</ecNumber>
    </recommendedName>
    <alternativeName>
        <fullName evidence="1">PNP/PMP oxidase</fullName>
        <shortName evidence="1">PNPOx</shortName>
    </alternativeName>
    <alternativeName>
        <fullName evidence="1">Pyridoxal 5'-phosphate synthase</fullName>
    </alternativeName>
</protein>